<sequence length="94" mass="10186">MMTQGAVLGLIREGVFQVVLLVAPVLCTALVVGLIVAIFQAVTSIQEQTLTFVPKMLTILGMIALLGGWMLTMLQNYTVRLFDIIPQLVRSGPV</sequence>
<accession>P74931</accession>
<protein>
    <recommendedName>
        <fullName>Flagellar biosynthetic protein FliQ</fullName>
    </recommendedName>
</protein>
<organism>
    <name type="scientific">Treponema pallidum (strain Nichols)</name>
    <dbReference type="NCBI Taxonomy" id="243276"/>
    <lineage>
        <taxon>Bacteria</taxon>
        <taxon>Pseudomonadati</taxon>
        <taxon>Spirochaetota</taxon>
        <taxon>Spirochaetia</taxon>
        <taxon>Spirochaetales</taxon>
        <taxon>Treponemataceae</taxon>
        <taxon>Treponema</taxon>
    </lineage>
</organism>
<keyword id="KW-0975">Bacterial flagellum</keyword>
<keyword id="KW-1003">Cell membrane</keyword>
<keyword id="KW-0472">Membrane</keyword>
<keyword id="KW-1185">Reference proteome</keyword>
<keyword id="KW-0812">Transmembrane</keyword>
<keyword id="KW-1133">Transmembrane helix</keyword>
<evidence type="ECO:0000250" key="1"/>
<evidence type="ECO:0000255" key="2"/>
<evidence type="ECO:0000305" key="3"/>
<feature type="chain" id="PRO_0000129102" description="Flagellar biosynthetic protein FliQ">
    <location>
        <begin position="1"/>
        <end position="94"/>
    </location>
</feature>
<feature type="transmembrane region" description="Helical" evidence="2">
    <location>
        <begin position="19"/>
        <end position="39"/>
    </location>
</feature>
<feature type="transmembrane region" description="Helical" evidence="2">
    <location>
        <begin position="50"/>
        <end position="70"/>
    </location>
</feature>
<comment type="function">
    <text>Role in flagellar biosynthesis.</text>
</comment>
<comment type="subcellular location">
    <subcellularLocation>
        <location evidence="3">Cell membrane</location>
        <topology evidence="3">Multi-pass membrane protein</topology>
    </subcellularLocation>
    <subcellularLocation>
        <location evidence="1">Bacterial flagellum basal body</location>
    </subcellularLocation>
</comment>
<comment type="similarity">
    <text evidence="3">Belongs to the FliQ/MopD/SpaQ family.</text>
</comment>
<reference key="1">
    <citation type="journal article" date="1995" name="Gene">
        <title>Identification and sequences of the Treponema pallidum fliM', fliY, fliP, fliQ, fliR and flhB' genes.</title>
        <authorList>
            <person name="Hardham J.M."/>
            <person name="Frye J.G."/>
            <person name="Stamm L.V."/>
        </authorList>
    </citation>
    <scope>NUCLEOTIDE SEQUENCE [GENOMIC DNA]</scope>
    <source>
        <strain>Nichols</strain>
    </source>
</reference>
<reference key="2">
    <citation type="journal article" date="1998" name="Science">
        <title>Complete genome sequence of Treponema pallidum, the syphilis spirochete.</title>
        <authorList>
            <person name="Fraser C.M."/>
            <person name="Norris S.J."/>
            <person name="Weinstock G.M."/>
            <person name="White O."/>
            <person name="Sutton G.G."/>
            <person name="Dodson R.J."/>
            <person name="Gwinn M.L."/>
            <person name="Hickey E.K."/>
            <person name="Clayton R.A."/>
            <person name="Ketchum K.A."/>
            <person name="Sodergren E."/>
            <person name="Hardham J.M."/>
            <person name="McLeod M.P."/>
            <person name="Salzberg S.L."/>
            <person name="Peterson J.D."/>
            <person name="Khalak H.G."/>
            <person name="Richardson D.L."/>
            <person name="Howell J.K."/>
            <person name="Chidambaram M."/>
            <person name="Utterback T.R."/>
            <person name="McDonald L.A."/>
            <person name="Artiach P."/>
            <person name="Bowman C."/>
            <person name="Cotton M.D."/>
            <person name="Fujii C."/>
            <person name="Garland S.A."/>
            <person name="Hatch B."/>
            <person name="Horst K."/>
            <person name="Roberts K.M."/>
            <person name="Sandusky M."/>
            <person name="Weidman J.F."/>
            <person name="Smith H.O."/>
            <person name="Venter J.C."/>
        </authorList>
    </citation>
    <scope>NUCLEOTIDE SEQUENCE [LARGE SCALE GENOMIC DNA]</scope>
    <source>
        <strain>Nichols</strain>
    </source>
</reference>
<name>FLIQ_TREPA</name>
<gene>
    <name type="primary">fliQ</name>
    <name type="ordered locus">TP_0717</name>
</gene>
<dbReference type="EMBL" id="U36839">
    <property type="protein sequence ID" value="AAB00547.1"/>
    <property type="molecule type" value="Genomic_DNA"/>
</dbReference>
<dbReference type="EMBL" id="AE000520">
    <property type="protein sequence ID" value="AAC65683.1"/>
    <property type="molecule type" value="Genomic_DNA"/>
</dbReference>
<dbReference type="PIR" id="JC4508">
    <property type="entry name" value="JC4508"/>
</dbReference>
<dbReference type="SMR" id="P74931"/>
<dbReference type="IntAct" id="P74931">
    <property type="interactions" value="2"/>
</dbReference>
<dbReference type="STRING" id="243276.TP_0717"/>
<dbReference type="EnsemblBacteria" id="AAC65683">
    <property type="protein sequence ID" value="AAC65683"/>
    <property type="gene ID" value="TP_0717"/>
</dbReference>
<dbReference type="KEGG" id="tpa:TP_0717"/>
<dbReference type="KEGG" id="tpw:TPANIC_0717"/>
<dbReference type="eggNOG" id="COG1987">
    <property type="taxonomic scope" value="Bacteria"/>
</dbReference>
<dbReference type="HOGENOM" id="CLU_164516_2_0_12"/>
<dbReference type="Proteomes" id="UP000000811">
    <property type="component" value="Chromosome"/>
</dbReference>
<dbReference type="GO" id="GO:0009425">
    <property type="term" value="C:bacterial-type flagellum basal body"/>
    <property type="evidence" value="ECO:0007669"/>
    <property type="project" value="UniProtKB-SubCell"/>
</dbReference>
<dbReference type="GO" id="GO:0005886">
    <property type="term" value="C:plasma membrane"/>
    <property type="evidence" value="ECO:0007669"/>
    <property type="project" value="UniProtKB-SubCell"/>
</dbReference>
<dbReference type="GO" id="GO:0044780">
    <property type="term" value="P:bacterial-type flagellum assembly"/>
    <property type="evidence" value="ECO:0007669"/>
    <property type="project" value="InterPro"/>
</dbReference>
<dbReference type="GO" id="GO:0009306">
    <property type="term" value="P:protein secretion"/>
    <property type="evidence" value="ECO:0007669"/>
    <property type="project" value="InterPro"/>
</dbReference>
<dbReference type="InterPro" id="IPR002191">
    <property type="entry name" value="Bac_export_3"/>
</dbReference>
<dbReference type="InterPro" id="IPR006305">
    <property type="entry name" value="FliQ"/>
</dbReference>
<dbReference type="NCBIfam" id="TIGR01402">
    <property type="entry name" value="fliQ"/>
    <property type="match status" value="1"/>
</dbReference>
<dbReference type="PANTHER" id="PTHR34040">
    <property type="entry name" value="FLAGELLAR BIOSYNTHETIC PROTEIN FLIQ"/>
    <property type="match status" value="1"/>
</dbReference>
<dbReference type="PANTHER" id="PTHR34040:SF2">
    <property type="entry name" value="FLAGELLAR BIOSYNTHETIC PROTEIN FLIQ"/>
    <property type="match status" value="1"/>
</dbReference>
<dbReference type="Pfam" id="PF01313">
    <property type="entry name" value="Bac_export_3"/>
    <property type="match status" value="1"/>
</dbReference>
<dbReference type="PIRSF" id="PIRSF004669">
    <property type="entry name" value="FliQ"/>
    <property type="match status" value="1"/>
</dbReference>
<dbReference type="PRINTS" id="PR00952">
    <property type="entry name" value="TYPE3IMQPROT"/>
</dbReference>
<proteinExistence type="inferred from homology"/>